<protein>
    <recommendedName>
        <fullName evidence="1">Ribosomal RNA large subunit methyltransferase H</fullName>
        <ecNumber evidence="1">2.1.1.177</ecNumber>
    </recommendedName>
    <alternativeName>
        <fullName evidence="1">23S rRNA (pseudouridine1915-N3)-methyltransferase</fullName>
    </alternativeName>
    <alternativeName>
        <fullName evidence="1">23S rRNA m3Psi1915 methyltransferase</fullName>
    </alternativeName>
    <alternativeName>
        <fullName evidence="1">rRNA (pseudouridine-N3-)-methyltransferase RlmH</fullName>
    </alternativeName>
</protein>
<proteinExistence type="inferred from homology"/>
<name>RLMH_YERPA</name>
<evidence type="ECO:0000255" key="1">
    <source>
        <dbReference type="HAMAP-Rule" id="MF_00658"/>
    </source>
</evidence>
<organism>
    <name type="scientific">Yersinia pestis bv. Antiqua (strain Antiqua)</name>
    <dbReference type="NCBI Taxonomy" id="360102"/>
    <lineage>
        <taxon>Bacteria</taxon>
        <taxon>Pseudomonadati</taxon>
        <taxon>Pseudomonadota</taxon>
        <taxon>Gammaproteobacteria</taxon>
        <taxon>Enterobacterales</taxon>
        <taxon>Yersiniaceae</taxon>
        <taxon>Yersinia</taxon>
    </lineage>
</organism>
<comment type="function">
    <text evidence="1">Specifically methylates the pseudouridine at position 1915 (m3Psi1915) in 23S rRNA.</text>
</comment>
<comment type="catalytic activity">
    <reaction evidence="1">
        <text>pseudouridine(1915) in 23S rRNA + S-adenosyl-L-methionine = N(3)-methylpseudouridine(1915) in 23S rRNA + S-adenosyl-L-homocysteine + H(+)</text>
        <dbReference type="Rhea" id="RHEA:42752"/>
        <dbReference type="Rhea" id="RHEA-COMP:10221"/>
        <dbReference type="Rhea" id="RHEA-COMP:10222"/>
        <dbReference type="ChEBI" id="CHEBI:15378"/>
        <dbReference type="ChEBI" id="CHEBI:57856"/>
        <dbReference type="ChEBI" id="CHEBI:59789"/>
        <dbReference type="ChEBI" id="CHEBI:65314"/>
        <dbReference type="ChEBI" id="CHEBI:74486"/>
        <dbReference type="EC" id="2.1.1.177"/>
    </reaction>
</comment>
<comment type="subunit">
    <text evidence="1">Homodimer.</text>
</comment>
<comment type="subcellular location">
    <subcellularLocation>
        <location evidence="1">Cytoplasm</location>
    </subcellularLocation>
</comment>
<comment type="similarity">
    <text evidence="1">Belongs to the RNA methyltransferase RlmH family.</text>
</comment>
<accession>Q1C516</accession>
<feature type="chain" id="PRO_0000260632" description="Ribosomal RNA large subunit methyltransferase H">
    <location>
        <begin position="1"/>
        <end position="156"/>
    </location>
</feature>
<feature type="binding site" evidence="1">
    <location>
        <position position="73"/>
    </location>
    <ligand>
        <name>S-adenosyl-L-methionine</name>
        <dbReference type="ChEBI" id="CHEBI:59789"/>
    </ligand>
</feature>
<feature type="binding site" evidence="1">
    <location>
        <position position="104"/>
    </location>
    <ligand>
        <name>S-adenosyl-L-methionine</name>
        <dbReference type="ChEBI" id="CHEBI:59789"/>
    </ligand>
</feature>
<feature type="binding site" evidence="1">
    <location>
        <begin position="123"/>
        <end position="128"/>
    </location>
    <ligand>
        <name>S-adenosyl-L-methionine</name>
        <dbReference type="ChEBI" id="CHEBI:59789"/>
    </ligand>
</feature>
<sequence length="156" mass="17520">MKLQLVAVGTKMPDWVQTGFIEYLRRFPKDMPFELAEIPAGKRGKNADIKRILEKEGELMLAAVGKNNRIVTLDIPGTPWETPQLAQQLERWKQDGRDVSLLIGGPEGLAPACKAAAEQSWSLSPLTLPHPLVRVLVAESLYRAWSITTNHPYHRE</sequence>
<reference key="1">
    <citation type="journal article" date="2006" name="J. Bacteriol.">
        <title>Complete genome sequence of Yersinia pestis strains Antiqua and Nepal516: evidence of gene reduction in an emerging pathogen.</title>
        <authorList>
            <person name="Chain P.S.G."/>
            <person name="Hu P."/>
            <person name="Malfatti S.A."/>
            <person name="Radnedge L."/>
            <person name="Larimer F."/>
            <person name="Vergez L.M."/>
            <person name="Worsham P."/>
            <person name="Chu M.C."/>
            <person name="Andersen G.L."/>
        </authorList>
    </citation>
    <scope>NUCLEOTIDE SEQUENCE [LARGE SCALE GENOMIC DNA]</scope>
    <source>
        <strain>Antiqua</strain>
    </source>
</reference>
<dbReference type="EC" id="2.1.1.177" evidence="1"/>
<dbReference type="EMBL" id="CP000308">
    <property type="protein sequence ID" value="ABG14456.1"/>
    <property type="molecule type" value="Genomic_DNA"/>
</dbReference>
<dbReference type="RefSeq" id="WP_002210328.1">
    <property type="nucleotide sequence ID" value="NZ_CP009906.1"/>
</dbReference>
<dbReference type="SMR" id="Q1C516"/>
<dbReference type="GeneID" id="57976090"/>
<dbReference type="KEGG" id="ypa:YPA_2492"/>
<dbReference type="Proteomes" id="UP000001971">
    <property type="component" value="Chromosome"/>
</dbReference>
<dbReference type="GO" id="GO:0005737">
    <property type="term" value="C:cytoplasm"/>
    <property type="evidence" value="ECO:0007669"/>
    <property type="project" value="UniProtKB-SubCell"/>
</dbReference>
<dbReference type="GO" id="GO:0070038">
    <property type="term" value="F:rRNA (pseudouridine-N3-)-methyltransferase activity"/>
    <property type="evidence" value="ECO:0007669"/>
    <property type="project" value="UniProtKB-UniRule"/>
</dbReference>
<dbReference type="CDD" id="cd18081">
    <property type="entry name" value="RlmH-like"/>
    <property type="match status" value="1"/>
</dbReference>
<dbReference type="FunFam" id="3.40.1280.10:FF:000004">
    <property type="entry name" value="Ribosomal RNA large subunit methyltransferase H"/>
    <property type="match status" value="1"/>
</dbReference>
<dbReference type="Gene3D" id="3.40.1280.10">
    <property type="match status" value="1"/>
</dbReference>
<dbReference type="HAMAP" id="MF_00658">
    <property type="entry name" value="23SrRNA_methyltr_H"/>
    <property type="match status" value="1"/>
</dbReference>
<dbReference type="InterPro" id="IPR029028">
    <property type="entry name" value="Alpha/beta_knot_MTases"/>
</dbReference>
<dbReference type="InterPro" id="IPR003742">
    <property type="entry name" value="RlmH-like"/>
</dbReference>
<dbReference type="InterPro" id="IPR029026">
    <property type="entry name" value="tRNA_m1G_MTases_N"/>
</dbReference>
<dbReference type="NCBIfam" id="NF000984">
    <property type="entry name" value="PRK00103.1-1"/>
    <property type="match status" value="1"/>
</dbReference>
<dbReference type="NCBIfam" id="NF000986">
    <property type="entry name" value="PRK00103.1-4"/>
    <property type="match status" value="1"/>
</dbReference>
<dbReference type="NCBIfam" id="TIGR00246">
    <property type="entry name" value="tRNA_RlmH_YbeA"/>
    <property type="match status" value="1"/>
</dbReference>
<dbReference type="PANTHER" id="PTHR33603">
    <property type="entry name" value="METHYLTRANSFERASE"/>
    <property type="match status" value="1"/>
</dbReference>
<dbReference type="PANTHER" id="PTHR33603:SF1">
    <property type="entry name" value="RIBOSOMAL RNA LARGE SUBUNIT METHYLTRANSFERASE H"/>
    <property type="match status" value="1"/>
</dbReference>
<dbReference type="Pfam" id="PF02590">
    <property type="entry name" value="SPOUT_MTase"/>
    <property type="match status" value="1"/>
</dbReference>
<dbReference type="PIRSF" id="PIRSF004505">
    <property type="entry name" value="MT_bac"/>
    <property type="match status" value="1"/>
</dbReference>
<dbReference type="SUPFAM" id="SSF75217">
    <property type="entry name" value="alpha/beta knot"/>
    <property type="match status" value="1"/>
</dbReference>
<keyword id="KW-0963">Cytoplasm</keyword>
<keyword id="KW-0489">Methyltransferase</keyword>
<keyword id="KW-0698">rRNA processing</keyword>
<keyword id="KW-0949">S-adenosyl-L-methionine</keyword>
<keyword id="KW-0808">Transferase</keyword>
<gene>
    <name evidence="1" type="primary">rlmH</name>
    <name type="ordered locus">YPA_2492</name>
</gene>